<accession>A7TF50</accession>
<keyword id="KW-0963">Cytoplasm</keyword>
<keyword id="KW-0539">Nucleus</keyword>
<keyword id="KW-1185">Reference proteome</keyword>
<protein>
    <recommendedName>
        <fullName>Restriction of telomere capping protein 4</fullName>
    </recommendedName>
</protein>
<reference key="1">
    <citation type="journal article" date="2007" name="Proc. Natl. Acad. Sci. U.S.A.">
        <title>Independent sorting-out of thousands of duplicated gene pairs in two yeast species descended from a whole-genome duplication.</title>
        <authorList>
            <person name="Scannell D.R."/>
            <person name="Frank A.C."/>
            <person name="Conant G.C."/>
            <person name="Byrne K.P."/>
            <person name="Woolfit M."/>
            <person name="Wolfe K.H."/>
        </authorList>
    </citation>
    <scope>NUCLEOTIDE SEQUENCE [LARGE SCALE GENOMIC DNA]</scope>
    <source>
        <strain>ATCC 22028 / DSM 70294 / BCRC 21397 / CBS 2163 / NBRC 10782 / NRRL Y-8283 / UCD 57-17</strain>
    </source>
</reference>
<sequence>MSNKGLKRKTYGKRSLNYSIKNSKLNLNQESSEHSSRSNTELSDDSASSFECEDRVQDDESYTNGISNQIINAFGVLEGSNLKVEEDSVSNGENEFITTTNSEEEKIADADDEQPLDEIEVVKLKDTKLHVKYGSHELKHLGLFDSILQKVPLKLHKRKKRTIIKEFTQRDFLIKKLEVRAKYNKEFKLPQVLYHDEIIEAIKPYMDIIIQLLKGKLQSVYYDSAKQAFLNSERAILSAHEFRALDLKKFQAGYYGLRRQLCVGEYIYDIYKEKICSLKSPTARWWGPRDFSSYVLAPELLISVCIEEMGLKDDPNYFDDNNEGSGESARSKAYSILQDTVKFGQIVADTDPMQPWEVLSEEKNIENLQLNVAKYSSRKWRIALPKET</sequence>
<proteinExistence type="inferred from homology"/>
<organism>
    <name type="scientific">Vanderwaltozyma polyspora (strain ATCC 22028 / DSM 70294 / BCRC 21397 / CBS 2163 / NBRC 10782 / NRRL Y-8283 / UCD 57-17)</name>
    <name type="common">Kluyveromyces polysporus</name>
    <dbReference type="NCBI Taxonomy" id="436907"/>
    <lineage>
        <taxon>Eukaryota</taxon>
        <taxon>Fungi</taxon>
        <taxon>Dikarya</taxon>
        <taxon>Ascomycota</taxon>
        <taxon>Saccharomycotina</taxon>
        <taxon>Saccharomycetes</taxon>
        <taxon>Saccharomycetales</taxon>
        <taxon>Saccharomycetaceae</taxon>
        <taxon>Vanderwaltozyma</taxon>
    </lineage>
</organism>
<comment type="function">
    <text evidence="1">May be involved in a process influencing telomere capping.</text>
</comment>
<comment type="subcellular location">
    <subcellularLocation>
        <location evidence="1">Cytoplasm</location>
    </subcellularLocation>
    <subcellularLocation>
        <location evidence="1">Nucleus</location>
    </subcellularLocation>
</comment>
<comment type="similarity">
    <text evidence="3">Belongs to the RTC4 family.</text>
</comment>
<dbReference type="EMBL" id="DS480382">
    <property type="protein sequence ID" value="EDO19075.1"/>
    <property type="molecule type" value="Genomic_DNA"/>
</dbReference>
<dbReference type="RefSeq" id="XP_001646933.1">
    <property type="nucleotide sequence ID" value="XM_001646883.1"/>
</dbReference>
<dbReference type="FunCoup" id="A7TF50">
    <property type="interactions" value="32"/>
</dbReference>
<dbReference type="STRING" id="436907.A7TF50"/>
<dbReference type="GeneID" id="5547402"/>
<dbReference type="KEGG" id="vpo:Kpol_2000p40"/>
<dbReference type="eggNOG" id="ENOG502S1RG">
    <property type="taxonomic scope" value="Eukaryota"/>
</dbReference>
<dbReference type="HOGENOM" id="CLU_049922_1_0_1"/>
<dbReference type="InParanoid" id="A7TF50"/>
<dbReference type="OrthoDB" id="128308at2759"/>
<dbReference type="PhylomeDB" id="A7TF50"/>
<dbReference type="Proteomes" id="UP000000267">
    <property type="component" value="Unassembled WGS sequence"/>
</dbReference>
<dbReference type="GO" id="GO:0005737">
    <property type="term" value="C:cytoplasm"/>
    <property type="evidence" value="ECO:0007669"/>
    <property type="project" value="UniProtKB-SubCell"/>
</dbReference>
<dbReference type="GO" id="GO:0005634">
    <property type="term" value="C:nucleus"/>
    <property type="evidence" value="ECO:0007669"/>
    <property type="project" value="UniProtKB-SubCell"/>
</dbReference>
<dbReference type="InterPro" id="IPR039024">
    <property type="entry name" value="RTC4"/>
</dbReference>
<dbReference type="InterPro" id="IPR028094">
    <property type="entry name" value="RTC4_C"/>
</dbReference>
<dbReference type="PANTHER" id="PTHR41391">
    <property type="entry name" value="RESTRICTION OF TELOMERE CAPPING PROTEIN 4"/>
    <property type="match status" value="1"/>
</dbReference>
<dbReference type="PANTHER" id="PTHR41391:SF1">
    <property type="entry name" value="RESTRICTION OF TELOMERE CAPPING PROTEIN 4"/>
    <property type="match status" value="1"/>
</dbReference>
<dbReference type="Pfam" id="PF14474">
    <property type="entry name" value="RTC4"/>
    <property type="match status" value="1"/>
</dbReference>
<dbReference type="SMART" id="SM01312">
    <property type="entry name" value="RTC4"/>
    <property type="match status" value="1"/>
</dbReference>
<evidence type="ECO:0000250" key="1"/>
<evidence type="ECO:0000256" key="2">
    <source>
        <dbReference type="SAM" id="MobiDB-lite"/>
    </source>
</evidence>
<evidence type="ECO:0000305" key="3"/>
<feature type="chain" id="PRO_0000408798" description="Restriction of telomere capping protein 4">
    <location>
        <begin position="1"/>
        <end position="388"/>
    </location>
</feature>
<feature type="region of interest" description="Disordered" evidence="2">
    <location>
        <begin position="22"/>
        <end position="58"/>
    </location>
</feature>
<feature type="compositionally biased region" description="Polar residues" evidence="2">
    <location>
        <begin position="37"/>
        <end position="49"/>
    </location>
</feature>
<gene>
    <name type="primary">RTC4</name>
    <name type="ORF">Kpol_2000p40</name>
</gene>
<name>RTC4_VANPO</name>